<accession>B6YTH7</accession>
<dbReference type="EC" id="2.7.7.6" evidence="1"/>
<dbReference type="EMBL" id="CP000855">
    <property type="protein sequence ID" value="ACJ15864.1"/>
    <property type="molecule type" value="Genomic_DNA"/>
</dbReference>
<dbReference type="RefSeq" id="WP_012571336.1">
    <property type="nucleotide sequence ID" value="NC_011529.1"/>
</dbReference>
<dbReference type="SMR" id="B6YTH7"/>
<dbReference type="STRING" id="523850.TON_0379"/>
<dbReference type="GeneID" id="7016674"/>
<dbReference type="KEGG" id="ton:TON_0379"/>
<dbReference type="PATRIC" id="fig|523850.10.peg.382"/>
<dbReference type="eggNOG" id="arCOG04111">
    <property type="taxonomic scope" value="Archaea"/>
</dbReference>
<dbReference type="HOGENOM" id="CLU_090381_5_0_2"/>
<dbReference type="OrthoDB" id="24205at2157"/>
<dbReference type="Proteomes" id="UP000002727">
    <property type="component" value="Chromosome"/>
</dbReference>
<dbReference type="GO" id="GO:0005737">
    <property type="term" value="C:cytoplasm"/>
    <property type="evidence" value="ECO:0007669"/>
    <property type="project" value="UniProtKB-SubCell"/>
</dbReference>
<dbReference type="GO" id="GO:0000428">
    <property type="term" value="C:DNA-directed RNA polymerase complex"/>
    <property type="evidence" value="ECO:0007669"/>
    <property type="project" value="UniProtKB-KW"/>
</dbReference>
<dbReference type="GO" id="GO:0003677">
    <property type="term" value="F:DNA binding"/>
    <property type="evidence" value="ECO:0007669"/>
    <property type="project" value="InterPro"/>
</dbReference>
<dbReference type="GO" id="GO:0003899">
    <property type="term" value="F:DNA-directed RNA polymerase activity"/>
    <property type="evidence" value="ECO:0007669"/>
    <property type="project" value="UniProtKB-UniRule"/>
</dbReference>
<dbReference type="GO" id="GO:0046983">
    <property type="term" value="F:protein dimerization activity"/>
    <property type="evidence" value="ECO:0007669"/>
    <property type="project" value="InterPro"/>
</dbReference>
<dbReference type="GO" id="GO:0006351">
    <property type="term" value="P:DNA-templated transcription"/>
    <property type="evidence" value="ECO:0007669"/>
    <property type="project" value="UniProtKB-UniRule"/>
</dbReference>
<dbReference type="CDD" id="cd06927">
    <property type="entry name" value="RNAP_L"/>
    <property type="match status" value="1"/>
</dbReference>
<dbReference type="Gene3D" id="3.30.1360.10">
    <property type="entry name" value="RNA polymerase, RBP11-like subunit"/>
    <property type="match status" value="1"/>
</dbReference>
<dbReference type="HAMAP" id="MF_00261">
    <property type="entry name" value="RNApol_arch_Rpo11"/>
    <property type="match status" value="1"/>
</dbReference>
<dbReference type="InterPro" id="IPR036603">
    <property type="entry name" value="RBP11-like"/>
</dbReference>
<dbReference type="InterPro" id="IPR009025">
    <property type="entry name" value="RBP11-like_dimer"/>
</dbReference>
<dbReference type="InterPro" id="IPR008193">
    <property type="entry name" value="RNA_pol_Rpb11_13-16kDa_CS"/>
</dbReference>
<dbReference type="InterPro" id="IPR022905">
    <property type="entry name" value="Rpo11-like"/>
</dbReference>
<dbReference type="NCBIfam" id="NF002235">
    <property type="entry name" value="PRK01146.1-3"/>
    <property type="match status" value="1"/>
</dbReference>
<dbReference type="PANTHER" id="PTHR13946">
    <property type="entry name" value="DNA-DIRECTED RNA POLYMERASE I,II,III"/>
    <property type="match status" value="1"/>
</dbReference>
<dbReference type="PANTHER" id="PTHR13946:SF28">
    <property type="entry name" value="DNA-DIRECTED RNA POLYMERASES I AND III SUBUNIT RPAC2"/>
    <property type="match status" value="1"/>
</dbReference>
<dbReference type="Pfam" id="PF13656">
    <property type="entry name" value="RNA_pol_L_2"/>
    <property type="match status" value="1"/>
</dbReference>
<dbReference type="SUPFAM" id="SSF55257">
    <property type="entry name" value="RBP11-like subunits of RNA polymerase"/>
    <property type="match status" value="1"/>
</dbReference>
<dbReference type="PROSITE" id="PS01154">
    <property type="entry name" value="RNA_POL_L_13KD"/>
    <property type="match status" value="1"/>
</dbReference>
<name>RPO11_THEON</name>
<keyword id="KW-0963">Cytoplasm</keyword>
<keyword id="KW-0240">DNA-directed RNA polymerase</keyword>
<keyword id="KW-0548">Nucleotidyltransferase</keyword>
<keyword id="KW-0804">Transcription</keyword>
<keyword id="KW-0808">Transferase</keyword>
<sequence>MRIEVIKREENVLEFYLEGEDHTFANLLNEVLHENEHVTFAGYTIEHPVLMARKPKFRVVTDGKITPEQVLEEAAQKIFDRARAVLEAWKEVLGE</sequence>
<evidence type="ECO:0000255" key="1">
    <source>
        <dbReference type="HAMAP-Rule" id="MF_00261"/>
    </source>
</evidence>
<organism>
    <name type="scientific">Thermococcus onnurineus (strain NA1)</name>
    <dbReference type="NCBI Taxonomy" id="523850"/>
    <lineage>
        <taxon>Archaea</taxon>
        <taxon>Methanobacteriati</taxon>
        <taxon>Methanobacteriota</taxon>
        <taxon>Thermococci</taxon>
        <taxon>Thermococcales</taxon>
        <taxon>Thermococcaceae</taxon>
        <taxon>Thermococcus</taxon>
    </lineage>
</organism>
<protein>
    <recommendedName>
        <fullName evidence="1">DNA-directed RNA polymerase subunit Rpo11</fullName>
        <ecNumber evidence="1">2.7.7.6</ecNumber>
    </recommendedName>
    <alternativeName>
        <fullName evidence="1">DNA-directed RNA polymerase subunit L</fullName>
    </alternativeName>
</protein>
<comment type="function">
    <text evidence="1">DNA-dependent RNA polymerase (RNAP) catalyzes the transcription of DNA into RNA using the four ribonucleoside triphosphates as substrates.</text>
</comment>
<comment type="catalytic activity">
    <reaction evidence="1">
        <text>RNA(n) + a ribonucleoside 5'-triphosphate = RNA(n+1) + diphosphate</text>
        <dbReference type="Rhea" id="RHEA:21248"/>
        <dbReference type="Rhea" id="RHEA-COMP:14527"/>
        <dbReference type="Rhea" id="RHEA-COMP:17342"/>
        <dbReference type="ChEBI" id="CHEBI:33019"/>
        <dbReference type="ChEBI" id="CHEBI:61557"/>
        <dbReference type="ChEBI" id="CHEBI:140395"/>
        <dbReference type="EC" id="2.7.7.6"/>
    </reaction>
</comment>
<comment type="subunit">
    <text evidence="1">Part of the RNA polymerase complex.</text>
</comment>
<comment type="subcellular location">
    <subcellularLocation>
        <location evidence="1">Cytoplasm</location>
    </subcellularLocation>
</comment>
<comment type="similarity">
    <text evidence="1">Belongs to the archaeal Rpo11/eukaryotic RPB11/RPC19 RNA polymerase subunit family.</text>
</comment>
<proteinExistence type="inferred from homology"/>
<gene>
    <name evidence="1" type="primary">rpo11</name>
    <name evidence="1" type="synonym">rpoL</name>
    <name type="ordered locus">TON_0379</name>
</gene>
<reference key="1">
    <citation type="journal article" date="2008" name="J. Bacteriol.">
        <title>The complete genome sequence of Thermococcus onnurineus NA1 reveals a mixed heterotrophic and carboxydotrophic metabolism.</title>
        <authorList>
            <person name="Lee H.S."/>
            <person name="Kang S.G."/>
            <person name="Bae S.S."/>
            <person name="Lim J.K."/>
            <person name="Cho Y."/>
            <person name="Kim Y.J."/>
            <person name="Jeon J.H."/>
            <person name="Cha S.-S."/>
            <person name="Kwon K.K."/>
            <person name="Kim H.-T."/>
            <person name="Park C.-J."/>
            <person name="Lee H.-W."/>
            <person name="Kim S.I."/>
            <person name="Chun J."/>
            <person name="Colwell R.R."/>
            <person name="Kim S.-J."/>
            <person name="Lee J.-H."/>
        </authorList>
    </citation>
    <scope>NUCLEOTIDE SEQUENCE [LARGE SCALE GENOMIC DNA]</scope>
    <source>
        <strain>NA1</strain>
    </source>
</reference>
<feature type="chain" id="PRO_1000114194" description="DNA-directed RNA polymerase subunit Rpo11">
    <location>
        <begin position="1"/>
        <end position="95"/>
    </location>
</feature>